<evidence type="ECO:0000255" key="1">
    <source>
        <dbReference type="HAMAP-Rule" id="MF_00658"/>
    </source>
</evidence>
<gene>
    <name evidence="1" type="primary">rlmH</name>
    <name type="ordered locus">SUN_1323</name>
</gene>
<dbReference type="EC" id="2.1.1.177" evidence="1"/>
<dbReference type="EMBL" id="AP009179">
    <property type="protein sequence ID" value="BAF72276.1"/>
    <property type="molecule type" value="Genomic_DNA"/>
</dbReference>
<dbReference type="RefSeq" id="WP_011981009.1">
    <property type="nucleotide sequence ID" value="NC_009663.1"/>
</dbReference>
<dbReference type="SMR" id="A6Q9W7"/>
<dbReference type="STRING" id="387093.SUN_1323"/>
<dbReference type="KEGG" id="sun:SUN_1323"/>
<dbReference type="eggNOG" id="COG1576">
    <property type="taxonomic scope" value="Bacteria"/>
</dbReference>
<dbReference type="HOGENOM" id="CLU_100552_2_1_7"/>
<dbReference type="OrthoDB" id="9806643at2"/>
<dbReference type="Proteomes" id="UP000006378">
    <property type="component" value="Chromosome"/>
</dbReference>
<dbReference type="GO" id="GO:0005737">
    <property type="term" value="C:cytoplasm"/>
    <property type="evidence" value="ECO:0007669"/>
    <property type="project" value="UniProtKB-SubCell"/>
</dbReference>
<dbReference type="GO" id="GO:0070038">
    <property type="term" value="F:rRNA (pseudouridine-N3-)-methyltransferase activity"/>
    <property type="evidence" value="ECO:0007669"/>
    <property type="project" value="UniProtKB-UniRule"/>
</dbReference>
<dbReference type="CDD" id="cd18081">
    <property type="entry name" value="RlmH-like"/>
    <property type="match status" value="1"/>
</dbReference>
<dbReference type="Gene3D" id="3.40.1280.10">
    <property type="match status" value="1"/>
</dbReference>
<dbReference type="HAMAP" id="MF_00658">
    <property type="entry name" value="23SrRNA_methyltr_H"/>
    <property type="match status" value="1"/>
</dbReference>
<dbReference type="InterPro" id="IPR029028">
    <property type="entry name" value="Alpha/beta_knot_MTases"/>
</dbReference>
<dbReference type="InterPro" id="IPR003742">
    <property type="entry name" value="RlmH-like"/>
</dbReference>
<dbReference type="InterPro" id="IPR029026">
    <property type="entry name" value="tRNA_m1G_MTases_N"/>
</dbReference>
<dbReference type="PANTHER" id="PTHR33603">
    <property type="entry name" value="METHYLTRANSFERASE"/>
    <property type="match status" value="1"/>
</dbReference>
<dbReference type="PANTHER" id="PTHR33603:SF1">
    <property type="entry name" value="RIBOSOMAL RNA LARGE SUBUNIT METHYLTRANSFERASE H"/>
    <property type="match status" value="1"/>
</dbReference>
<dbReference type="Pfam" id="PF02590">
    <property type="entry name" value="SPOUT_MTase"/>
    <property type="match status" value="1"/>
</dbReference>
<dbReference type="PIRSF" id="PIRSF004505">
    <property type="entry name" value="MT_bac"/>
    <property type="match status" value="1"/>
</dbReference>
<dbReference type="SUPFAM" id="SSF75217">
    <property type="entry name" value="alpha/beta knot"/>
    <property type="match status" value="1"/>
</dbReference>
<organism>
    <name type="scientific">Sulfurovum sp. (strain NBC37-1)</name>
    <dbReference type="NCBI Taxonomy" id="387093"/>
    <lineage>
        <taxon>Bacteria</taxon>
        <taxon>Pseudomonadati</taxon>
        <taxon>Campylobacterota</taxon>
        <taxon>Epsilonproteobacteria</taxon>
        <taxon>Campylobacterales</taxon>
        <taxon>Sulfurovaceae</taxon>
        <taxon>Sulfurovum</taxon>
    </lineage>
</organism>
<name>RLMH_SULNB</name>
<sequence length="153" mass="17307">MKINVIIIDKKGKDQLYAPLIEHYKKISKPFAKVEVIELFDKEIAKAQDISPEAAQRSYSKALEKYLGSGINIALDPASKEVDSFEFAKLLKDSVTVNFYIGGAYGFERDFLSKCNNAVSFGKITLSHKLVKVVLMEQIFRGLTINHNHPYHK</sequence>
<protein>
    <recommendedName>
        <fullName evidence="1">Ribosomal RNA large subunit methyltransferase H</fullName>
        <ecNumber evidence="1">2.1.1.177</ecNumber>
    </recommendedName>
    <alternativeName>
        <fullName evidence="1">23S rRNA (pseudouridine1915-N3)-methyltransferase</fullName>
    </alternativeName>
    <alternativeName>
        <fullName evidence="1">23S rRNA m3Psi1915 methyltransferase</fullName>
    </alternativeName>
    <alternativeName>
        <fullName evidence="1">rRNA (pseudouridine-N3-)-methyltransferase RlmH</fullName>
    </alternativeName>
</protein>
<feature type="chain" id="PRO_1000061850" description="Ribosomal RNA large subunit methyltransferase H">
    <location>
        <begin position="1"/>
        <end position="153"/>
    </location>
</feature>
<feature type="binding site" evidence="1">
    <location>
        <position position="63"/>
    </location>
    <ligand>
        <name>S-adenosyl-L-methionine</name>
        <dbReference type="ChEBI" id="CHEBI:59789"/>
    </ligand>
</feature>
<feature type="binding site" evidence="1">
    <location>
        <position position="102"/>
    </location>
    <ligand>
        <name>S-adenosyl-L-methionine</name>
        <dbReference type="ChEBI" id="CHEBI:59789"/>
    </ligand>
</feature>
<feature type="binding site" evidence="1">
    <location>
        <begin position="121"/>
        <end position="126"/>
    </location>
    <ligand>
        <name>S-adenosyl-L-methionine</name>
        <dbReference type="ChEBI" id="CHEBI:59789"/>
    </ligand>
</feature>
<accession>A6Q9W7</accession>
<comment type="function">
    <text evidence="1">Specifically methylates the pseudouridine at position 1915 (m3Psi1915) in 23S rRNA.</text>
</comment>
<comment type="catalytic activity">
    <reaction evidence="1">
        <text>pseudouridine(1915) in 23S rRNA + S-adenosyl-L-methionine = N(3)-methylpseudouridine(1915) in 23S rRNA + S-adenosyl-L-homocysteine + H(+)</text>
        <dbReference type="Rhea" id="RHEA:42752"/>
        <dbReference type="Rhea" id="RHEA-COMP:10221"/>
        <dbReference type="Rhea" id="RHEA-COMP:10222"/>
        <dbReference type="ChEBI" id="CHEBI:15378"/>
        <dbReference type="ChEBI" id="CHEBI:57856"/>
        <dbReference type="ChEBI" id="CHEBI:59789"/>
        <dbReference type="ChEBI" id="CHEBI:65314"/>
        <dbReference type="ChEBI" id="CHEBI:74486"/>
        <dbReference type="EC" id="2.1.1.177"/>
    </reaction>
</comment>
<comment type="subunit">
    <text evidence="1">Homodimer.</text>
</comment>
<comment type="subcellular location">
    <subcellularLocation>
        <location evidence="1">Cytoplasm</location>
    </subcellularLocation>
</comment>
<comment type="similarity">
    <text evidence="1">Belongs to the RNA methyltransferase RlmH family.</text>
</comment>
<reference key="1">
    <citation type="journal article" date="2007" name="Proc. Natl. Acad. Sci. U.S.A.">
        <title>Deep-sea vent epsilon-proteobacterial genomes provide insights into emergence of pathogens.</title>
        <authorList>
            <person name="Nakagawa S."/>
            <person name="Takaki Y."/>
            <person name="Shimamura S."/>
            <person name="Reysenbach A.-L."/>
            <person name="Takai K."/>
            <person name="Horikoshi K."/>
        </authorList>
    </citation>
    <scope>NUCLEOTIDE SEQUENCE [LARGE SCALE GENOMIC DNA]</scope>
    <source>
        <strain>NBC37-1</strain>
    </source>
</reference>
<keyword id="KW-0963">Cytoplasm</keyword>
<keyword id="KW-0489">Methyltransferase</keyword>
<keyword id="KW-0698">rRNA processing</keyword>
<keyword id="KW-0949">S-adenosyl-L-methionine</keyword>
<keyword id="KW-0808">Transferase</keyword>
<proteinExistence type="inferred from homology"/>